<gene>
    <name evidence="1" type="primary">thrS</name>
    <name type="ordered locus">BVU_4059</name>
</gene>
<organism>
    <name type="scientific">Phocaeicola vulgatus (strain ATCC 8482 / DSM 1447 / JCM 5826 / CCUG 4940 / NBRC 14291 / NCTC 11154)</name>
    <name type="common">Bacteroides vulgatus</name>
    <dbReference type="NCBI Taxonomy" id="435590"/>
    <lineage>
        <taxon>Bacteria</taxon>
        <taxon>Pseudomonadati</taxon>
        <taxon>Bacteroidota</taxon>
        <taxon>Bacteroidia</taxon>
        <taxon>Bacteroidales</taxon>
        <taxon>Bacteroidaceae</taxon>
        <taxon>Phocaeicola</taxon>
    </lineage>
</organism>
<sequence length="646" mass="74213">MIKITFPDGSVREYNEGVTGLQIAESISSRLAQDVLACGVNGETIDLSRPINEDANFVLYKWEDEQGKHAFWHTSAHLLAEALQELYPGIQFGIGPAIENGFYYDVDPGEAIIKEADLPAIEAKMAELAAKKEILVRQSIAKEDALKKFGERGETYKCELISELEDGHITTYTQGAFTDLCRGPHLTSTAPIKAIKLLTVAGAYWRGQEDRKQMTRIYGITFPKKKMLDEYLVMLEEAKKRDHRKIGKEMDLFMFTDMVGKGLPMWLPKGTALRIRLQDFLRRIQARYDYQEVMCPPIGNKNLYITSGHYAKYGKDSFQPIHTPEEGEEYFLKPMNCPHHCMIYKNSPRSYKDLPLRIAEFGTVCRYEQSGELHGLTRVRSFTQDDAHLFCRPDQVKEEFLRVMDIINIVFKSMNFENVEAQISLRDKVNREKYIGSDENWEKAEQAIIEACEEKGLTAKVEYGEAAFYGPKLDFMVKDAIGRRWQLGTIQVDYNLPERFQLEYMGSDNQKHRPVMIHRAPFGSMERFVAVLIEHTAGKFPLWLTPDQVAILPISEKFNEYAEQVKAELRKFDVRAIVDDRNEKIGRKIRDNEMKRIPYMLIVGEKEAENGEVAVRKQGEGDKGTMKIEEFGKNLAEEVSNMINKW</sequence>
<proteinExistence type="inferred from homology"/>
<comment type="function">
    <text evidence="1">Catalyzes the attachment of threonine to tRNA(Thr) in a two-step reaction: L-threonine is first activated by ATP to form Thr-AMP and then transferred to the acceptor end of tRNA(Thr). Also edits incorrectly charged L-seryl-tRNA(Thr).</text>
</comment>
<comment type="catalytic activity">
    <reaction evidence="1">
        <text>tRNA(Thr) + L-threonine + ATP = L-threonyl-tRNA(Thr) + AMP + diphosphate + H(+)</text>
        <dbReference type="Rhea" id="RHEA:24624"/>
        <dbReference type="Rhea" id="RHEA-COMP:9670"/>
        <dbReference type="Rhea" id="RHEA-COMP:9704"/>
        <dbReference type="ChEBI" id="CHEBI:15378"/>
        <dbReference type="ChEBI" id="CHEBI:30616"/>
        <dbReference type="ChEBI" id="CHEBI:33019"/>
        <dbReference type="ChEBI" id="CHEBI:57926"/>
        <dbReference type="ChEBI" id="CHEBI:78442"/>
        <dbReference type="ChEBI" id="CHEBI:78534"/>
        <dbReference type="ChEBI" id="CHEBI:456215"/>
        <dbReference type="EC" id="6.1.1.3"/>
    </reaction>
</comment>
<comment type="cofactor">
    <cofactor evidence="1">
        <name>Zn(2+)</name>
        <dbReference type="ChEBI" id="CHEBI:29105"/>
    </cofactor>
    <text evidence="1">Binds 1 zinc ion per subunit.</text>
</comment>
<comment type="subunit">
    <text evidence="1">Homodimer.</text>
</comment>
<comment type="subcellular location">
    <subcellularLocation>
        <location evidence="1">Cytoplasm</location>
    </subcellularLocation>
</comment>
<comment type="similarity">
    <text evidence="1">Belongs to the class-II aminoacyl-tRNA synthetase family.</text>
</comment>
<dbReference type="EC" id="6.1.1.3" evidence="1"/>
<dbReference type="EMBL" id="CP000139">
    <property type="protein sequence ID" value="ABR41661.1"/>
    <property type="molecule type" value="Genomic_DNA"/>
</dbReference>
<dbReference type="RefSeq" id="WP_008782199.1">
    <property type="nucleotide sequence ID" value="NZ_CAXVNH010000002.1"/>
</dbReference>
<dbReference type="SMR" id="A6L7J7"/>
<dbReference type="STRING" id="435590.BVU_4059"/>
<dbReference type="PaxDb" id="435590-BVU_4059"/>
<dbReference type="GeneID" id="5305018"/>
<dbReference type="KEGG" id="bvu:BVU_4059"/>
<dbReference type="eggNOG" id="COG0441">
    <property type="taxonomic scope" value="Bacteria"/>
</dbReference>
<dbReference type="HOGENOM" id="CLU_008554_0_1_10"/>
<dbReference type="BioCyc" id="BVUL435590:G1G59-4198-MONOMER"/>
<dbReference type="Proteomes" id="UP000002861">
    <property type="component" value="Chromosome"/>
</dbReference>
<dbReference type="GO" id="GO:0005737">
    <property type="term" value="C:cytoplasm"/>
    <property type="evidence" value="ECO:0007669"/>
    <property type="project" value="UniProtKB-SubCell"/>
</dbReference>
<dbReference type="GO" id="GO:0005524">
    <property type="term" value="F:ATP binding"/>
    <property type="evidence" value="ECO:0007669"/>
    <property type="project" value="UniProtKB-UniRule"/>
</dbReference>
<dbReference type="GO" id="GO:0046872">
    <property type="term" value="F:metal ion binding"/>
    <property type="evidence" value="ECO:0007669"/>
    <property type="project" value="UniProtKB-KW"/>
</dbReference>
<dbReference type="GO" id="GO:0004829">
    <property type="term" value="F:threonine-tRNA ligase activity"/>
    <property type="evidence" value="ECO:0007669"/>
    <property type="project" value="UniProtKB-UniRule"/>
</dbReference>
<dbReference type="GO" id="GO:0000049">
    <property type="term" value="F:tRNA binding"/>
    <property type="evidence" value="ECO:0007669"/>
    <property type="project" value="UniProtKB-KW"/>
</dbReference>
<dbReference type="GO" id="GO:0006435">
    <property type="term" value="P:threonyl-tRNA aminoacylation"/>
    <property type="evidence" value="ECO:0007669"/>
    <property type="project" value="UniProtKB-UniRule"/>
</dbReference>
<dbReference type="CDD" id="cd01667">
    <property type="entry name" value="TGS_ThrRS"/>
    <property type="match status" value="1"/>
</dbReference>
<dbReference type="CDD" id="cd00860">
    <property type="entry name" value="ThrRS_anticodon"/>
    <property type="match status" value="1"/>
</dbReference>
<dbReference type="CDD" id="cd00771">
    <property type="entry name" value="ThrRS_core"/>
    <property type="match status" value="1"/>
</dbReference>
<dbReference type="FunFam" id="3.10.20.30:FF:000005">
    <property type="entry name" value="Threonine--tRNA ligase"/>
    <property type="match status" value="1"/>
</dbReference>
<dbReference type="FunFam" id="3.30.930.10:FF:000002">
    <property type="entry name" value="Threonine--tRNA ligase"/>
    <property type="match status" value="1"/>
</dbReference>
<dbReference type="FunFam" id="3.40.50.800:FF:000001">
    <property type="entry name" value="Threonine--tRNA ligase"/>
    <property type="match status" value="1"/>
</dbReference>
<dbReference type="FunFam" id="3.30.980.10:FF:000005">
    <property type="entry name" value="Threonyl-tRNA synthetase, mitochondrial"/>
    <property type="match status" value="1"/>
</dbReference>
<dbReference type="Gene3D" id="3.10.20.30">
    <property type="match status" value="1"/>
</dbReference>
<dbReference type="Gene3D" id="3.30.54.20">
    <property type="match status" value="1"/>
</dbReference>
<dbReference type="Gene3D" id="3.40.50.800">
    <property type="entry name" value="Anticodon-binding domain"/>
    <property type="match status" value="1"/>
</dbReference>
<dbReference type="Gene3D" id="3.30.930.10">
    <property type="entry name" value="Bira Bifunctional Protein, Domain 2"/>
    <property type="match status" value="1"/>
</dbReference>
<dbReference type="Gene3D" id="3.30.980.10">
    <property type="entry name" value="Threonyl-trna Synthetase, Chain A, domain 2"/>
    <property type="match status" value="1"/>
</dbReference>
<dbReference type="HAMAP" id="MF_00184">
    <property type="entry name" value="Thr_tRNA_synth"/>
    <property type="match status" value="1"/>
</dbReference>
<dbReference type="InterPro" id="IPR002314">
    <property type="entry name" value="aa-tRNA-synt_IIb"/>
</dbReference>
<dbReference type="InterPro" id="IPR006195">
    <property type="entry name" value="aa-tRNA-synth_II"/>
</dbReference>
<dbReference type="InterPro" id="IPR045864">
    <property type="entry name" value="aa-tRNA-synth_II/BPL/LPL"/>
</dbReference>
<dbReference type="InterPro" id="IPR004154">
    <property type="entry name" value="Anticodon-bd"/>
</dbReference>
<dbReference type="InterPro" id="IPR036621">
    <property type="entry name" value="Anticodon-bd_dom_sf"/>
</dbReference>
<dbReference type="InterPro" id="IPR012675">
    <property type="entry name" value="Beta-grasp_dom_sf"/>
</dbReference>
<dbReference type="InterPro" id="IPR004095">
    <property type="entry name" value="TGS"/>
</dbReference>
<dbReference type="InterPro" id="IPR012676">
    <property type="entry name" value="TGS-like"/>
</dbReference>
<dbReference type="InterPro" id="IPR002320">
    <property type="entry name" value="Thr-tRNA-ligase_IIa"/>
</dbReference>
<dbReference type="InterPro" id="IPR018163">
    <property type="entry name" value="Thr/Ala-tRNA-synth_IIc_edit"/>
</dbReference>
<dbReference type="InterPro" id="IPR047246">
    <property type="entry name" value="ThrRS_anticodon"/>
</dbReference>
<dbReference type="InterPro" id="IPR033728">
    <property type="entry name" value="ThrRS_core"/>
</dbReference>
<dbReference type="InterPro" id="IPR012947">
    <property type="entry name" value="tRNA_SAD"/>
</dbReference>
<dbReference type="NCBIfam" id="TIGR00418">
    <property type="entry name" value="thrS"/>
    <property type="match status" value="1"/>
</dbReference>
<dbReference type="PANTHER" id="PTHR11451:SF44">
    <property type="entry name" value="THREONINE--TRNA LIGASE, CHLOROPLASTIC_MITOCHONDRIAL 2"/>
    <property type="match status" value="1"/>
</dbReference>
<dbReference type="PANTHER" id="PTHR11451">
    <property type="entry name" value="THREONINE-TRNA LIGASE"/>
    <property type="match status" value="1"/>
</dbReference>
<dbReference type="Pfam" id="PF03129">
    <property type="entry name" value="HGTP_anticodon"/>
    <property type="match status" value="1"/>
</dbReference>
<dbReference type="Pfam" id="PF02824">
    <property type="entry name" value="TGS"/>
    <property type="match status" value="1"/>
</dbReference>
<dbReference type="Pfam" id="PF00587">
    <property type="entry name" value="tRNA-synt_2b"/>
    <property type="match status" value="1"/>
</dbReference>
<dbReference type="Pfam" id="PF07973">
    <property type="entry name" value="tRNA_SAD"/>
    <property type="match status" value="1"/>
</dbReference>
<dbReference type="PRINTS" id="PR01047">
    <property type="entry name" value="TRNASYNTHTHR"/>
</dbReference>
<dbReference type="SMART" id="SM00863">
    <property type="entry name" value="tRNA_SAD"/>
    <property type="match status" value="1"/>
</dbReference>
<dbReference type="SUPFAM" id="SSF52954">
    <property type="entry name" value="Class II aaRS ABD-related"/>
    <property type="match status" value="1"/>
</dbReference>
<dbReference type="SUPFAM" id="SSF55681">
    <property type="entry name" value="Class II aaRS and biotin synthetases"/>
    <property type="match status" value="1"/>
</dbReference>
<dbReference type="SUPFAM" id="SSF81271">
    <property type="entry name" value="TGS-like"/>
    <property type="match status" value="1"/>
</dbReference>
<dbReference type="SUPFAM" id="SSF55186">
    <property type="entry name" value="ThrRS/AlaRS common domain"/>
    <property type="match status" value="1"/>
</dbReference>
<dbReference type="PROSITE" id="PS50862">
    <property type="entry name" value="AA_TRNA_LIGASE_II"/>
    <property type="match status" value="1"/>
</dbReference>
<dbReference type="PROSITE" id="PS51880">
    <property type="entry name" value="TGS"/>
    <property type="match status" value="1"/>
</dbReference>
<keyword id="KW-0030">Aminoacyl-tRNA synthetase</keyword>
<keyword id="KW-0067">ATP-binding</keyword>
<keyword id="KW-0963">Cytoplasm</keyword>
<keyword id="KW-0436">Ligase</keyword>
<keyword id="KW-0479">Metal-binding</keyword>
<keyword id="KW-0547">Nucleotide-binding</keyword>
<keyword id="KW-0648">Protein biosynthesis</keyword>
<keyword id="KW-0694">RNA-binding</keyword>
<keyword id="KW-0820">tRNA-binding</keyword>
<keyword id="KW-0862">Zinc</keyword>
<protein>
    <recommendedName>
        <fullName evidence="1">Threonine--tRNA ligase</fullName>
        <ecNumber evidence="1">6.1.1.3</ecNumber>
    </recommendedName>
    <alternativeName>
        <fullName evidence="1">Threonyl-tRNA synthetase</fullName>
        <shortName evidence="1">ThrRS</shortName>
    </alternativeName>
</protein>
<feature type="chain" id="PRO_1000020342" description="Threonine--tRNA ligase">
    <location>
        <begin position="1"/>
        <end position="646"/>
    </location>
</feature>
<feature type="domain" description="TGS" evidence="2">
    <location>
        <begin position="1"/>
        <end position="61"/>
    </location>
</feature>
<feature type="region of interest" description="Catalytic" evidence="1">
    <location>
        <begin position="242"/>
        <end position="541"/>
    </location>
</feature>
<feature type="binding site" evidence="1">
    <location>
        <position position="337"/>
    </location>
    <ligand>
        <name>Zn(2+)</name>
        <dbReference type="ChEBI" id="CHEBI:29105"/>
    </ligand>
</feature>
<feature type="binding site" evidence="1">
    <location>
        <position position="388"/>
    </location>
    <ligand>
        <name>Zn(2+)</name>
        <dbReference type="ChEBI" id="CHEBI:29105"/>
    </ligand>
</feature>
<feature type="binding site" evidence="1">
    <location>
        <position position="518"/>
    </location>
    <ligand>
        <name>Zn(2+)</name>
        <dbReference type="ChEBI" id="CHEBI:29105"/>
    </ligand>
</feature>
<evidence type="ECO:0000255" key="1">
    <source>
        <dbReference type="HAMAP-Rule" id="MF_00184"/>
    </source>
</evidence>
<evidence type="ECO:0000255" key="2">
    <source>
        <dbReference type="PROSITE-ProRule" id="PRU01228"/>
    </source>
</evidence>
<reference key="1">
    <citation type="journal article" date="2007" name="PLoS Biol.">
        <title>Evolution of symbiotic bacteria in the distal human intestine.</title>
        <authorList>
            <person name="Xu J."/>
            <person name="Mahowald M.A."/>
            <person name="Ley R.E."/>
            <person name="Lozupone C.A."/>
            <person name="Hamady M."/>
            <person name="Martens E.C."/>
            <person name="Henrissat B."/>
            <person name="Coutinho P.M."/>
            <person name="Minx P."/>
            <person name="Latreille P."/>
            <person name="Cordum H."/>
            <person name="Van Brunt A."/>
            <person name="Kim K."/>
            <person name="Fulton R.S."/>
            <person name="Fulton L.A."/>
            <person name="Clifton S.W."/>
            <person name="Wilson R.K."/>
            <person name="Knight R.D."/>
            <person name="Gordon J.I."/>
        </authorList>
    </citation>
    <scope>NUCLEOTIDE SEQUENCE [LARGE SCALE GENOMIC DNA]</scope>
    <source>
        <strain>ATCC 8482 / DSM 1447 / JCM 5826 / CCUG 4940 / NBRC 14291 / NCTC 11154</strain>
    </source>
</reference>
<name>SYT_PHOV8</name>
<accession>A6L7J7</accession>